<feature type="chain" id="PRO_0000289464" description="Lipoprotein signal peptidase">
    <location>
        <begin position="1"/>
        <end position="169"/>
    </location>
</feature>
<feature type="transmembrane region" description="Helical" evidence="1">
    <location>
        <begin position="4"/>
        <end position="24"/>
    </location>
</feature>
<feature type="transmembrane region" description="Helical" evidence="1">
    <location>
        <begin position="42"/>
        <end position="62"/>
    </location>
</feature>
<feature type="transmembrane region" description="Helical" evidence="1">
    <location>
        <begin position="70"/>
        <end position="90"/>
    </location>
</feature>
<feature type="transmembrane region" description="Helical" evidence="1">
    <location>
        <begin position="102"/>
        <end position="122"/>
    </location>
</feature>
<feature type="transmembrane region" description="Helical" evidence="1">
    <location>
        <begin position="137"/>
        <end position="157"/>
    </location>
</feature>
<feature type="active site" evidence="1">
    <location>
        <position position="123"/>
    </location>
</feature>
<feature type="active site" evidence="1">
    <location>
        <position position="141"/>
    </location>
</feature>
<evidence type="ECO:0000255" key="1">
    <source>
        <dbReference type="HAMAP-Rule" id="MF_00161"/>
    </source>
</evidence>
<keyword id="KW-0064">Aspartyl protease</keyword>
<keyword id="KW-0997">Cell inner membrane</keyword>
<keyword id="KW-1003">Cell membrane</keyword>
<keyword id="KW-0378">Hydrolase</keyword>
<keyword id="KW-0472">Membrane</keyword>
<keyword id="KW-0645">Protease</keyword>
<keyword id="KW-0812">Transmembrane</keyword>
<keyword id="KW-1133">Transmembrane helix</keyword>
<protein>
    <recommendedName>
        <fullName evidence="1">Lipoprotein signal peptidase</fullName>
        <ecNumber evidence="1">3.4.23.36</ecNumber>
    </recommendedName>
    <alternativeName>
        <fullName evidence="1">Prolipoprotein signal peptidase</fullName>
    </alternativeName>
    <alternativeName>
        <fullName evidence="1">Signal peptidase II</fullName>
        <shortName evidence="1">SPase II</shortName>
    </alternativeName>
</protein>
<comment type="function">
    <text evidence="1">This protein specifically catalyzes the removal of signal peptides from prolipoproteins.</text>
</comment>
<comment type="catalytic activity">
    <reaction evidence="1">
        <text>Release of signal peptides from bacterial membrane prolipoproteins. Hydrolyzes -Xaa-Yaa-Zaa-|-(S,diacylglyceryl)Cys-, in which Xaa is hydrophobic (preferably Leu), and Yaa (Ala or Ser) and Zaa (Gly or Ala) have small, neutral side chains.</text>
        <dbReference type="EC" id="3.4.23.36"/>
    </reaction>
</comment>
<comment type="pathway">
    <text evidence="1">Protein modification; lipoprotein biosynthesis (signal peptide cleavage).</text>
</comment>
<comment type="subcellular location">
    <subcellularLocation>
        <location evidence="1">Cell inner membrane</location>
        <topology evidence="1">Multi-pass membrane protein</topology>
    </subcellularLocation>
</comment>
<comment type="similarity">
    <text evidence="1">Belongs to the peptidase A8 family.</text>
</comment>
<proteinExistence type="inferred from homology"/>
<reference key="1">
    <citation type="journal article" date="2006" name="PLoS Genet.">
        <title>The complete genome sequence and comparative genome analysis of the high pathogenicity Yersinia enterocolitica strain 8081.</title>
        <authorList>
            <person name="Thomson N.R."/>
            <person name="Howard S."/>
            <person name="Wren B.W."/>
            <person name="Holden M.T.G."/>
            <person name="Crossman L."/>
            <person name="Challis G.L."/>
            <person name="Churcher C."/>
            <person name="Mungall K."/>
            <person name="Brooks K."/>
            <person name="Chillingworth T."/>
            <person name="Feltwell T."/>
            <person name="Abdellah Z."/>
            <person name="Hauser H."/>
            <person name="Jagels K."/>
            <person name="Maddison M."/>
            <person name="Moule S."/>
            <person name="Sanders M."/>
            <person name="Whitehead S."/>
            <person name="Quail M.A."/>
            <person name="Dougan G."/>
            <person name="Parkhill J."/>
            <person name="Prentice M.B."/>
        </authorList>
    </citation>
    <scope>NUCLEOTIDE SEQUENCE [LARGE SCALE GENOMIC DNA]</scope>
    <source>
        <strain>NCTC 13174 / 8081</strain>
    </source>
</reference>
<gene>
    <name evidence="1" type="primary">lspA</name>
    <name type="ordered locus">YE0617</name>
</gene>
<name>LSPA_YERE8</name>
<dbReference type="EC" id="3.4.23.36" evidence="1"/>
<dbReference type="EMBL" id="AM286415">
    <property type="protein sequence ID" value="CAL10730.1"/>
    <property type="molecule type" value="Genomic_DNA"/>
</dbReference>
<dbReference type="RefSeq" id="WP_005157006.1">
    <property type="nucleotide sequence ID" value="NC_008800.1"/>
</dbReference>
<dbReference type="RefSeq" id="YP_001004970.1">
    <property type="nucleotide sequence ID" value="NC_008800.1"/>
</dbReference>
<dbReference type="SMR" id="A1JJE2"/>
<dbReference type="MEROPS" id="A08.001"/>
<dbReference type="GeneID" id="31411780"/>
<dbReference type="KEGG" id="yen:YE0617"/>
<dbReference type="PATRIC" id="fig|393305.7.peg.711"/>
<dbReference type="eggNOG" id="COG0597">
    <property type="taxonomic scope" value="Bacteria"/>
</dbReference>
<dbReference type="HOGENOM" id="CLU_083252_4_0_6"/>
<dbReference type="OrthoDB" id="9810259at2"/>
<dbReference type="UniPathway" id="UPA00665"/>
<dbReference type="Proteomes" id="UP000000642">
    <property type="component" value="Chromosome"/>
</dbReference>
<dbReference type="GO" id="GO:0005886">
    <property type="term" value="C:plasma membrane"/>
    <property type="evidence" value="ECO:0007669"/>
    <property type="project" value="UniProtKB-SubCell"/>
</dbReference>
<dbReference type="GO" id="GO:0004190">
    <property type="term" value="F:aspartic-type endopeptidase activity"/>
    <property type="evidence" value="ECO:0007669"/>
    <property type="project" value="UniProtKB-UniRule"/>
</dbReference>
<dbReference type="GO" id="GO:0006508">
    <property type="term" value="P:proteolysis"/>
    <property type="evidence" value="ECO:0007669"/>
    <property type="project" value="UniProtKB-KW"/>
</dbReference>
<dbReference type="HAMAP" id="MF_00161">
    <property type="entry name" value="LspA"/>
    <property type="match status" value="1"/>
</dbReference>
<dbReference type="InterPro" id="IPR001872">
    <property type="entry name" value="Peptidase_A8"/>
</dbReference>
<dbReference type="NCBIfam" id="TIGR00077">
    <property type="entry name" value="lspA"/>
    <property type="match status" value="1"/>
</dbReference>
<dbReference type="PANTHER" id="PTHR33695">
    <property type="entry name" value="LIPOPROTEIN SIGNAL PEPTIDASE"/>
    <property type="match status" value="1"/>
</dbReference>
<dbReference type="PANTHER" id="PTHR33695:SF1">
    <property type="entry name" value="LIPOPROTEIN SIGNAL PEPTIDASE"/>
    <property type="match status" value="1"/>
</dbReference>
<dbReference type="Pfam" id="PF01252">
    <property type="entry name" value="Peptidase_A8"/>
    <property type="match status" value="1"/>
</dbReference>
<dbReference type="PRINTS" id="PR00781">
    <property type="entry name" value="LIPOSIGPTASE"/>
</dbReference>
<dbReference type="PROSITE" id="PS00855">
    <property type="entry name" value="SPASE_II"/>
    <property type="match status" value="1"/>
</dbReference>
<accession>A1JJE2</accession>
<sequence>MSKPICSTGLRWLWLAVLVVIVDLSSKQWVMTHFALYESVPLIPFFNLTYAQNFGAAFSFLADKSGWQRWFFAGIAIGISVLLMVLMYRSTAKQRLLNCAYALIIGGALGNLFDRMVHGAVIDFIDFHVNNWHFPTFNIADTAICIGAALVIFEGFISPAEKTAMNKGE</sequence>
<organism>
    <name type="scientific">Yersinia enterocolitica serotype O:8 / biotype 1B (strain NCTC 13174 / 8081)</name>
    <dbReference type="NCBI Taxonomy" id="393305"/>
    <lineage>
        <taxon>Bacteria</taxon>
        <taxon>Pseudomonadati</taxon>
        <taxon>Pseudomonadota</taxon>
        <taxon>Gammaproteobacteria</taxon>
        <taxon>Enterobacterales</taxon>
        <taxon>Yersiniaceae</taxon>
        <taxon>Yersinia</taxon>
    </lineage>
</organism>